<name>ATD2B_HUMAN</name>
<keyword id="KW-0002">3D-structure</keyword>
<keyword id="KW-0025">Alternative splicing</keyword>
<keyword id="KW-0067">ATP-binding</keyword>
<keyword id="KW-0103">Bromodomain</keyword>
<keyword id="KW-0175">Coiled coil</keyword>
<keyword id="KW-0547">Nucleotide-binding</keyword>
<keyword id="KW-0539">Nucleus</keyword>
<keyword id="KW-0597">Phosphoprotein</keyword>
<keyword id="KW-1267">Proteomics identification</keyword>
<keyword id="KW-1185">Reference proteome</keyword>
<proteinExistence type="evidence at protein level"/>
<feature type="chain" id="PRO_0000050789" description="ATPase family AAA domain-containing protein 2B">
    <location>
        <begin position="1"/>
        <end position="1458"/>
    </location>
</feature>
<feature type="domain" description="Bromo" evidence="2">
    <location>
        <begin position="951"/>
        <end position="1066"/>
    </location>
</feature>
<feature type="region of interest" description="Disordered" evidence="3">
    <location>
        <begin position="1"/>
        <end position="155"/>
    </location>
</feature>
<feature type="region of interest" description="Disordered" evidence="3">
    <location>
        <begin position="244"/>
        <end position="286"/>
    </location>
</feature>
<feature type="region of interest" description="Disordered" evidence="3">
    <location>
        <begin position="321"/>
        <end position="353"/>
    </location>
</feature>
<feature type="region of interest" description="Disordered" evidence="3">
    <location>
        <begin position="1189"/>
        <end position="1208"/>
    </location>
</feature>
<feature type="region of interest" description="Disordered" evidence="3">
    <location>
        <begin position="1217"/>
        <end position="1257"/>
    </location>
</feature>
<feature type="region of interest" description="Disordered" evidence="3">
    <location>
        <begin position="1309"/>
        <end position="1330"/>
    </location>
</feature>
<feature type="coiled-coil region" evidence="1">
    <location>
        <begin position="943"/>
        <end position="974"/>
    </location>
</feature>
<feature type="compositionally biased region" description="Gly residues" evidence="3">
    <location>
        <begin position="23"/>
        <end position="33"/>
    </location>
</feature>
<feature type="compositionally biased region" description="Low complexity" evidence="3">
    <location>
        <begin position="34"/>
        <end position="58"/>
    </location>
</feature>
<feature type="compositionally biased region" description="Basic and acidic residues" evidence="3">
    <location>
        <begin position="99"/>
        <end position="115"/>
    </location>
</feature>
<feature type="compositionally biased region" description="Polar residues" evidence="3">
    <location>
        <begin position="116"/>
        <end position="129"/>
    </location>
</feature>
<feature type="compositionally biased region" description="Acidic residues" evidence="3">
    <location>
        <begin position="256"/>
        <end position="279"/>
    </location>
</feature>
<feature type="compositionally biased region" description="Basic residues" evidence="3">
    <location>
        <begin position="321"/>
        <end position="332"/>
    </location>
</feature>
<feature type="compositionally biased region" description="Low complexity" evidence="3">
    <location>
        <begin position="1240"/>
        <end position="1252"/>
    </location>
</feature>
<feature type="binding site" evidence="1">
    <location>
        <begin position="441"/>
        <end position="448"/>
    </location>
    <ligand>
        <name>ATP</name>
        <dbReference type="ChEBI" id="CHEBI:30616"/>
    </ligand>
</feature>
<feature type="modified residue" description="Phosphoserine" evidence="9 10 11">
    <location>
        <position position="16"/>
    </location>
</feature>
<feature type="modified residue" description="Phosphoserine" evidence="10 11">
    <location>
        <position position="79"/>
    </location>
</feature>
<feature type="modified residue" description="Phosphoserine" evidence="11">
    <location>
        <position position="81"/>
    </location>
</feature>
<feature type="modified residue" description="Phosphoserine" evidence="10 11">
    <location>
        <position position="86"/>
    </location>
</feature>
<feature type="modified residue" description="Phosphoserine" evidence="11">
    <location>
        <position position="140"/>
    </location>
</feature>
<feature type="modified residue" description="Phosphothreonine" evidence="11">
    <location>
        <position position="221"/>
    </location>
</feature>
<feature type="modified residue" description="Phosphoserine" evidence="11">
    <location>
        <position position="318"/>
    </location>
</feature>
<feature type="modified residue" description="Phosphoserine" evidence="12">
    <location>
        <position position="939"/>
    </location>
</feature>
<feature type="modified residue" description="Phosphoserine" evidence="10">
    <location>
        <position position="1338"/>
    </location>
</feature>
<feature type="modified residue" description="Phosphoserine" evidence="10 11">
    <location>
        <position position="1347"/>
    </location>
</feature>
<feature type="splice variant" id="VSP_023276" description="In isoform 2." evidence="7">
    <location>
        <begin position="988"/>
        <end position="992"/>
    </location>
</feature>
<feature type="sequence variant" id="VAR_055467" description="In dbSNP:rs10210982.">
    <original>S</original>
    <variation>P</variation>
    <location>
        <position position="118"/>
    </location>
</feature>
<feature type="sequence conflict" description="In Ref. 2; BAC04429." evidence="8" ref="2">
    <original>T</original>
    <variation>A</variation>
    <location>
        <position position="291"/>
    </location>
</feature>
<feature type="helix" evidence="13">
    <location>
        <begin position="955"/>
        <end position="976"/>
    </location>
</feature>
<feature type="helix" evidence="13">
    <location>
        <begin position="978"/>
        <end position="983"/>
    </location>
</feature>
<feature type="turn" evidence="13">
    <location>
        <begin position="989"/>
        <end position="991"/>
    </location>
</feature>
<feature type="helix" evidence="13">
    <location>
        <begin position="995"/>
        <end position="998"/>
    </location>
</feature>
<feature type="helix" evidence="13">
    <location>
        <begin position="1005"/>
        <end position="1013"/>
    </location>
</feature>
<feature type="helix" evidence="13">
    <location>
        <begin position="1020"/>
        <end position="1037"/>
    </location>
</feature>
<feature type="strand" evidence="13">
    <location>
        <begin position="1040"/>
        <end position="1042"/>
    </location>
</feature>
<feature type="helix" evidence="13">
    <location>
        <begin position="1043"/>
        <end position="1066"/>
    </location>
</feature>
<feature type="helix" evidence="13">
    <location>
        <begin position="1069"/>
        <end position="1080"/>
    </location>
</feature>
<reference key="1">
    <citation type="journal article" date="2005" name="Nature">
        <title>Generation and annotation of the DNA sequences of human chromosomes 2 and 4.</title>
        <authorList>
            <person name="Hillier L.W."/>
            <person name="Graves T.A."/>
            <person name="Fulton R.S."/>
            <person name="Fulton L.A."/>
            <person name="Pepin K.H."/>
            <person name="Minx P."/>
            <person name="Wagner-McPherson C."/>
            <person name="Layman D."/>
            <person name="Wylie K."/>
            <person name="Sekhon M."/>
            <person name="Becker M.C."/>
            <person name="Fewell G.A."/>
            <person name="Delehaunty K.D."/>
            <person name="Miner T.L."/>
            <person name="Nash W.E."/>
            <person name="Kremitzki C."/>
            <person name="Oddy L."/>
            <person name="Du H."/>
            <person name="Sun H."/>
            <person name="Bradshaw-Cordum H."/>
            <person name="Ali J."/>
            <person name="Carter J."/>
            <person name="Cordes M."/>
            <person name="Harris A."/>
            <person name="Isak A."/>
            <person name="van Brunt A."/>
            <person name="Nguyen C."/>
            <person name="Du F."/>
            <person name="Courtney L."/>
            <person name="Kalicki J."/>
            <person name="Ozersky P."/>
            <person name="Abbott S."/>
            <person name="Armstrong J."/>
            <person name="Belter E.A."/>
            <person name="Caruso L."/>
            <person name="Cedroni M."/>
            <person name="Cotton M."/>
            <person name="Davidson T."/>
            <person name="Desai A."/>
            <person name="Elliott G."/>
            <person name="Erb T."/>
            <person name="Fronick C."/>
            <person name="Gaige T."/>
            <person name="Haakenson W."/>
            <person name="Haglund K."/>
            <person name="Holmes A."/>
            <person name="Harkins R."/>
            <person name="Kim K."/>
            <person name="Kruchowski S.S."/>
            <person name="Strong C.M."/>
            <person name="Grewal N."/>
            <person name="Goyea E."/>
            <person name="Hou S."/>
            <person name="Levy A."/>
            <person name="Martinka S."/>
            <person name="Mead K."/>
            <person name="McLellan M.D."/>
            <person name="Meyer R."/>
            <person name="Randall-Maher J."/>
            <person name="Tomlinson C."/>
            <person name="Dauphin-Kohlberg S."/>
            <person name="Kozlowicz-Reilly A."/>
            <person name="Shah N."/>
            <person name="Swearengen-Shahid S."/>
            <person name="Snider J."/>
            <person name="Strong J.T."/>
            <person name="Thompson J."/>
            <person name="Yoakum M."/>
            <person name="Leonard S."/>
            <person name="Pearman C."/>
            <person name="Trani L."/>
            <person name="Radionenko M."/>
            <person name="Waligorski J.E."/>
            <person name="Wang C."/>
            <person name="Rock S.M."/>
            <person name="Tin-Wollam A.-M."/>
            <person name="Maupin R."/>
            <person name="Latreille P."/>
            <person name="Wendl M.C."/>
            <person name="Yang S.-P."/>
            <person name="Pohl C."/>
            <person name="Wallis J.W."/>
            <person name="Spieth J."/>
            <person name="Bieri T.A."/>
            <person name="Berkowicz N."/>
            <person name="Nelson J.O."/>
            <person name="Osborne J."/>
            <person name="Ding L."/>
            <person name="Meyer R."/>
            <person name="Sabo A."/>
            <person name="Shotland Y."/>
            <person name="Sinha P."/>
            <person name="Wohldmann P.E."/>
            <person name="Cook L.L."/>
            <person name="Hickenbotham M.T."/>
            <person name="Eldred J."/>
            <person name="Williams D."/>
            <person name="Jones T.A."/>
            <person name="She X."/>
            <person name="Ciccarelli F.D."/>
            <person name="Izaurralde E."/>
            <person name="Taylor J."/>
            <person name="Schmutz J."/>
            <person name="Myers R.M."/>
            <person name="Cox D.R."/>
            <person name="Huang X."/>
            <person name="McPherson J.D."/>
            <person name="Mardis E.R."/>
            <person name="Clifton S.W."/>
            <person name="Warren W.C."/>
            <person name="Chinwalla A.T."/>
            <person name="Eddy S.R."/>
            <person name="Marra M.A."/>
            <person name="Ovcharenko I."/>
            <person name="Furey T.S."/>
            <person name="Miller W."/>
            <person name="Eichler E.E."/>
            <person name="Bork P."/>
            <person name="Suyama M."/>
            <person name="Torrents D."/>
            <person name="Waterston R.H."/>
            <person name="Wilson R.K."/>
        </authorList>
    </citation>
    <scope>NUCLEOTIDE SEQUENCE [LARGE SCALE GENOMIC DNA]</scope>
</reference>
<reference key="2">
    <citation type="journal article" date="2004" name="Nat. Genet.">
        <title>Complete sequencing and characterization of 21,243 full-length human cDNAs.</title>
        <authorList>
            <person name="Ota T."/>
            <person name="Suzuki Y."/>
            <person name="Nishikawa T."/>
            <person name="Otsuki T."/>
            <person name="Sugiyama T."/>
            <person name="Irie R."/>
            <person name="Wakamatsu A."/>
            <person name="Hayashi K."/>
            <person name="Sato H."/>
            <person name="Nagai K."/>
            <person name="Kimura K."/>
            <person name="Makita H."/>
            <person name="Sekine M."/>
            <person name="Obayashi M."/>
            <person name="Nishi T."/>
            <person name="Shibahara T."/>
            <person name="Tanaka T."/>
            <person name="Ishii S."/>
            <person name="Yamamoto J."/>
            <person name="Saito K."/>
            <person name="Kawai Y."/>
            <person name="Isono Y."/>
            <person name="Nakamura Y."/>
            <person name="Nagahari K."/>
            <person name="Murakami K."/>
            <person name="Yasuda T."/>
            <person name="Iwayanagi T."/>
            <person name="Wagatsuma M."/>
            <person name="Shiratori A."/>
            <person name="Sudo H."/>
            <person name="Hosoiri T."/>
            <person name="Kaku Y."/>
            <person name="Kodaira H."/>
            <person name="Kondo H."/>
            <person name="Sugawara M."/>
            <person name="Takahashi M."/>
            <person name="Kanda K."/>
            <person name="Yokoi T."/>
            <person name="Furuya T."/>
            <person name="Kikkawa E."/>
            <person name="Omura Y."/>
            <person name="Abe K."/>
            <person name="Kamihara K."/>
            <person name="Katsuta N."/>
            <person name="Sato K."/>
            <person name="Tanikawa M."/>
            <person name="Yamazaki M."/>
            <person name="Ninomiya K."/>
            <person name="Ishibashi T."/>
            <person name="Yamashita H."/>
            <person name="Murakawa K."/>
            <person name="Fujimori K."/>
            <person name="Tanai H."/>
            <person name="Kimata M."/>
            <person name="Watanabe M."/>
            <person name="Hiraoka S."/>
            <person name="Chiba Y."/>
            <person name="Ishida S."/>
            <person name="Ono Y."/>
            <person name="Takiguchi S."/>
            <person name="Watanabe S."/>
            <person name="Yosida M."/>
            <person name="Hotuta T."/>
            <person name="Kusano J."/>
            <person name="Kanehori K."/>
            <person name="Takahashi-Fujii A."/>
            <person name="Hara H."/>
            <person name="Tanase T.-O."/>
            <person name="Nomura Y."/>
            <person name="Togiya S."/>
            <person name="Komai F."/>
            <person name="Hara R."/>
            <person name="Takeuchi K."/>
            <person name="Arita M."/>
            <person name="Imose N."/>
            <person name="Musashino K."/>
            <person name="Yuuki H."/>
            <person name="Oshima A."/>
            <person name="Sasaki N."/>
            <person name="Aotsuka S."/>
            <person name="Yoshikawa Y."/>
            <person name="Matsunawa H."/>
            <person name="Ichihara T."/>
            <person name="Shiohata N."/>
            <person name="Sano S."/>
            <person name="Moriya S."/>
            <person name="Momiyama H."/>
            <person name="Satoh N."/>
            <person name="Takami S."/>
            <person name="Terashima Y."/>
            <person name="Suzuki O."/>
            <person name="Nakagawa S."/>
            <person name="Senoh A."/>
            <person name="Mizoguchi H."/>
            <person name="Goto Y."/>
            <person name="Shimizu F."/>
            <person name="Wakebe H."/>
            <person name="Hishigaki H."/>
            <person name="Watanabe T."/>
            <person name="Sugiyama A."/>
            <person name="Takemoto M."/>
            <person name="Kawakami B."/>
            <person name="Yamazaki M."/>
            <person name="Watanabe K."/>
            <person name="Kumagai A."/>
            <person name="Itakura S."/>
            <person name="Fukuzumi Y."/>
            <person name="Fujimori Y."/>
            <person name="Komiyama M."/>
            <person name="Tashiro H."/>
            <person name="Tanigami A."/>
            <person name="Fujiwara T."/>
            <person name="Ono T."/>
            <person name="Yamada K."/>
            <person name="Fujii Y."/>
            <person name="Ozaki K."/>
            <person name="Hirao M."/>
            <person name="Ohmori Y."/>
            <person name="Kawabata A."/>
            <person name="Hikiji T."/>
            <person name="Kobatake N."/>
            <person name="Inagaki H."/>
            <person name="Ikema Y."/>
            <person name="Okamoto S."/>
            <person name="Okitani R."/>
            <person name="Kawakami T."/>
            <person name="Noguchi S."/>
            <person name="Itoh T."/>
            <person name="Shigeta K."/>
            <person name="Senba T."/>
            <person name="Matsumura K."/>
            <person name="Nakajima Y."/>
            <person name="Mizuno T."/>
            <person name="Morinaga M."/>
            <person name="Sasaki M."/>
            <person name="Togashi T."/>
            <person name="Oyama M."/>
            <person name="Hata H."/>
            <person name="Watanabe M."/>
            <person name="Komatsu T."/>
            <person name="Mizushima-Sugano J."/>
            <person name="Satoh T."/>
            <person name="Shirai Y."/>
            <person name="Takahashi Y."/>
            <person name="Nakagawa K."/>
            <person name="Okumura K."/>
            <person name="Nagase T."/>
            <person name="Nomura N."/>
            <person name="Kikuchi H."/>
            <person name="Masuho Y."/>
            <person name="Yamashita R."/>
            <person name="Nakai K."/>
            <person name="Yada T."/>
            <person name="Nakamura Y."/>
            <person name="Ohara O."/>
            <person name="Isogai T."/>
            <person name="Sugano S."/>
        </authorList>
    </citation>
    <scope>NUCLEOTIDE SEQUENCE [LARGE SCALE MRNA] OF 1-1076 (ISOFORM 1)</scope>
    <source>
        <tissue>Brain</tissue>
    </source>
</reference>
<reference key="3">
    <citation type="journal article" date="1999" name="DNA Res.">
        <title>Prediction of the coding sequences of unidentified human genes. XV. The complete sequences of 100 new cDNA clones from brain which code for large proteins in vitro.</title>
        <authorList>
            <person name="Nagase T."/>
            <person name="Ishikawa K."/>
            <person name="Kikuno R."/>
            <person name="Hirosawa M."/>
            <person name="Nomura N."/>
            <person name="Ohara O."/>
        </authorList>
    </citation>
    <scope>NUCLEOTIDE SEQUENCE [LARGE SCALE MRNA] OF 721-1458 (ISOFORM 2)</scope>
    <source>
        <tissue>Brain</tissue>
    </source>
</reference>
<reference key="4">
    <citation type="journal article" date="2009" name="Anal. Chem.">
        <title>Lys-N and trypsin cover complementary parts of the phosphoproteome in a refined SCX-based approach.</title>
        <authorList>
            <person name="Gauci S."/>
            <person name="Helbig A.O."/>
            <person name="Slijper M."/>
            <person name="Krijgsveld J."/>
            <person name="Heck A.J."/>
            <person name="Mohammed S."/>
        </authorList>
    </citation>
    <scope>IDENTIFICATION BY MASS SPECTROMETRY [LARGE SCALE ANALYSIS]</scope>
</reference>
<reference key="5">
    <citation type="journal article" date="2010" name="Sci. Signal.">
        <title>Quantitative phosphoproteomics reveals widespread full phosphorylation site occupancy during mitosis.</title>
        <authorList>
            <person name="Olsen J.V."/>
            <person name="Vermeulen M."/>
            <person name="Santamaria A."/>
            <person name="Kumar C."/>
            <person name="Miller M.L."/>
            <person name="Jensen L.J."/>
            <person name="Gnad F."/>
            <person name="Cox J."/>
            <person name="Jensen T.S."/>
            <person name="Nigg E.A."/>
            <person name="Brunak S."/>
            <person name="Mann M."/>
        </authorList>
    </citation>
    <scope>PHOSPHORYLATION [LARGE SCALE ANALYSIS] AT SER-16</scope>
    <scope>IDENTIFICATION BY MASS SPECTROMETRY [LARGE SCALE ANALYSIS]</scope>
    <source>
        <tissue>Cervix carcinoma</tissue>
    </source>
</reference>
<reference key="6">
    <citation type="journal article" date="2011" name="Sci. Signal.">
        <title>System-wide temporal characterization of the proteome and phosphoproteome of human embryonic stem cell differentiation.</title>
        <authorList>
            <person name="Rigbolt K.T."/>
            <person name="Prokhorova T.A."/>
            <person name="Akimov V."/>
            <person name="Henningsen J."/>
            <person name="Johansen P.T."/>
            <person name="Kratchmarova I."/>
            <person name="Kassem M."/>
            <person name="Mann M."/>
            <person name="Olsen J.V."/>
            <person name="Blagoev B."/>
        </authorList>
    </citation>
    <scope>PHOSPHORYLATION [LARGE SCALE ANALYSIS] AT SER-16; SER-79; SER-86; SER-1338 AND SER-1347</scope>
    <scope>IDENTIFICATION BY MASS SPECTROMETRY [LARGE SCALE ANALYSIS]</scope>
</reference>
<reference key="7">
    <citation type="journal article" date="2013" name="J. Proteome Res.">
        <title>Toward a comprehensive characterization of a human cancer cell phosphoproteome.</title>
        <authorList>
            <person name="Zhou H."/>
            <person name="Di Palma S."/>
            <person name="Preisinger C."/>
            <person name="Peng M."/>
            <person name="Polat A.N."/>
            <person name="Heck A.J."/>
            <person name="Mohammed S."/>
        </authorList>
    </citation>
    <scope>PHOSPHORYLATION [LARGE SCALE ANALYSIS] AT SER-16; SER-79; SER-81; SER-86; SER-140; THR-221; SER-318 AND SER-1347</scope>
    <scope>IDENTIFICATION BY MASS SPECTROMETRY [LARGE SCALE ANALYSIS]</scope>
    <source>
        <tissue>Cervix carcinoma</tissue>
        <tissue>Erythroleukemia</tissue>
    </source>
</reference>
<reference key="8">
    <citation type="journal article" date="2014" name="J. Proteomics">
        <title>An enzyme assisted RP-RPLC approach for in-depth analysis of human liver phosphoproteome.</title>
        <authorList>
            <person name="Bian Y."/>
            <person name="Song C."/>
            <person name="Cheng K."/>
            <person name="Dong M."/>
            <person name="Wang F."/>
            <person name="Huang J."/>
            <person name="Sun D."/>
            <person name="Wang L."/>
            <person name="Ye M."/>
            <person name="Zou H."/>
        </authorList>
    </citation>
    <scope>PHOSPHORYLATION [LARGE SCALE ANALYSIS] AT SER-939</scope>
    <scope>IDENTIFICATION BY MASS SPECTROMETRY [LARGE SCALE ANALYSIS]</scope>
    <source>
        <tissue>Liver</tissue>
    </source>
</reference>
<reference key="9">
    <citation type="journal article" date="2014" name="Nat. Cell Biol.">
        <title>Nascent chromatin capture proteomics determines chromatin dynamics during DNA replication and identifies unknown fork components.</title>
        <authorList>
            <person name="Alabert C."/>
            <person name="Bukowski-Wills J.C."/>
            <person name="Lee S.B."/>
            <person name="Kustatscher G."/>
            <person name="Nakamura K."/>
            <person name="de Lima Alves F."/>
            <person name="Menard P."/>
            <person name="Mejlvang J."/>
            <person name="Rappsilber J."/>
            <person name="Groth A."/>
        </authorList>
    </citation>
    <scope>SUBCELLULAR LOCATION</scope>
</reference>
<reference key="10">
    <citation type="journal article" date="2015" name="Genes Dev.">
        <title>Screen identifies bromodomain protein ZMYND8 in chromatin recognition of transcription-associated DNA damage that promotes homologous recombination.</title>
        <authorList>
            <person name="Gong F."/>
            <person name="Chiu L.Y."/>
            <person name="Cox B."/>
            <person name="Aymard F."/>
            <person name="Clouaire T."/>
            <person name="Leung J.W."/>
            <person name="Cammarata M."/>
            <person name="Perez M."/>
            <person name="Agarwal P."/>
            <person name="Brodbelt J.S."/>
            <person name="Legube G."/>
            <person name="Miller K.M."/>
        </authorList>
    </citation>
    <scope>SUBCELLULAR LOCATION</scope>
</reference>
<reference key="11">
    <citation type="submission" date="2006-10" db="PDB data bank">
        <title>Solution structure of the bromodomain of human protein KIAA1240.</title>
        <authorList>
            <consortium name="RIKEN structural genomics initiative (RSGI)"/>
        </authorList>
    </citation>
    <scope>STRUCTURE BY NMR OF 958-1080</scope>
</reference>
<reference key="12">
    <citation type="journal article" date="2012" name="Cell">
        <title>Histone recognition and large-scale structural analysis of the human bromodomain family.</title>
        <authorList>
            <person name="Filippakopoulos P."/>
            <person name="Picaud S."/>
            <person name="Mangos M."/>
            <person name="Keates T."/>
            <person name="Lambert J.P."/>
            <person name="Barsyte-Lovejoy D."/>
            <person name="Felletar I."/>
            <person name="Volkmer R."/>
            <person name="Muller S."/>
            <person name="Pawson T."/>
            <person name="Gingras A.C."/>
            <person name="Arrowsmith C.H."/>
            <person name="Knapp S."/>
        </authorList>
    </citation>
    <scope>X-RAY CRYSTALLOGRAPHY (2.33 ANGSTROMS) OF 952-1086</scope>
    <scope>SUBUNIT</scope>
</reference>
<organism>
    <name type="scientific">Homo sapiens</name>
    <name type="common">Human</name>
    <dbReference type="NCBI Taxonomy" id="9606"/>
    <lineage>
        <taxon>Eukaryota</taxon>
        <taxon>Metazoa</taxon>
        <taxon>Chordata</taxon>
        <taxon>Craniata</taxon>
        <taxon>Vertebrata</taxon>
        <taxon>Euteleostomi</taxon>
        <taxon>Mammalia</taxon>
        <taxon>Eutheria</taxon>
        <taxon>Euarchontoglires</taxon>
        <taxon>Primates</taxon>
        <taxon>Haplorrhini</taxon>
        <taxon>Catarrhini</taxon>
        <taxon>Hominidae</taxon>
        <taxon>Homo</taxon>
    </lineage>
</organism>
<sequence>MVNTRKSSLRLLGSKSPGPGPGPGAGAEPGATGGSSHFISSRTRSSKTRAASCPAAKAGGSGGAGVTLDEARKVEVDGSLSDSHVSPPAKRTLKQPDSVCKDKSKSRSTGQREEWNLSTGQARLTSQPGATLPNGHSGLSLRSHPLRGEKKGDGDLSCINGDMEVRKSCRSRKNRFESVNQSLLFDQLVNSTAEAVLQEMDNINIRRNRRSGEVERLRMWTDTEFENMDMYSRVKRRRKSLRRNSYGIQNHHEVSTEGEEEESQEEDGDIEVEEAEGEENDRPYNLRQRKTVDRYQAPPIVPAHQKKRENTLFDIHRSPARRSHIRRKKHAIHSSDTTSSDEERFERRKSKSMARARNRCLPMNFRAEDLASGILRERVKVGASLADVDPMNIDKSVRFDSIGGLSHHIHALKEMVVFPLLYPEIFEKFKIQPPRGCLFYGPPGTGKTLVARALANECSQGDKKVAFFMRKGADCLSKWVGESERQLRLLFDQAYLMRPSIIFFDEIDGLAPVRSSRQDQIHSSIVSTLLALMDGLDNRGEIVVIGATNRLDSIDPALRRPGRFDREFLFNLPDQKARKHILQIHTRDWNPKLSDAFLGELAEKCVGYCGADIKALCTEAALIALRRRYPQIYASSHKLQLDVSSIVLSAQDFYHAMQNIVPASQRAVMSSGHALSPIIRPLLERSFNNILAVLQKVFPHAEISQSDKKEDIETLILEDSEDENALSIFETNCHSGSPKKQSSSAAIHKPYLHFTMSPYHQPTSYRPRLLLSGERGSGQTSHLAPALLHTLERFSVHRLDLPALYSVSAKTPEESCAQIFREARRTVPSIVYMPHIGDWWEAVSETVRATFLTLLQDIPSFSPIFLLSTSETMYSELPEEVKCIFRIQYEEVLYIQRPIEEDRRKFFQELILNQASMAPPRRKHAALCAMEVLPLALPSPPRQLSESEKSRMEDQEENTLRELRLFLRDVTKRLATDKRFNIFSKPVDIEEVSDYLEVIKEPMDLSTVITKIDKHNYLTAKDFLKDIDLICSNALEYNPDKDPGDKIIRHRACTLKDTAHAIIAAELDPEFNKLCEEIKEARIKRGLSVTSEQINPHSTGARKTETRVEEAFRHKQRNPMDVWHNSANKCAFRVRRKSRRRSQWGKGIIKKRKVNNLKKDEEDTKFADYENHTEDRKLLENGEFEVSTDCHEENGEETGDLSMTNDESSCDIMDLDQGQRLNNGAGTKENFASTEEESSNESLLVNSSSSLNPEQTSRKETFLKGNCLNGEASTDSFEGIPVLECQNGKLEVVSFCDSGDKCSSEQKILLEDQSKEKPETSTENHGDDLEKLEALECSNNEKLEPGSDVEVKDAELDKEGASKVKKYRKLILEQAKTTSLELVPEEPSEPVPPLIVDRERLKKLLDLLVDKSNNLAVDQLERLYSLLSQCIYRHRKDYDKSQLVEEMERTVHMFETFL</sequence>
<accession>Q9ULI0</accession>
<accession>B9ZVQ5</accession>
<accession>Q6ZNA6</accession>
<accession>Q8N9E7</accession>
<gene>
    <name type="primary">ATAD2B</name>
    <name type="synonym">KIAA1240</name>
</gene>
<protein>
    <recommendedName>
        <fullName>ATPase family AAA domain-containing protein 2B</fullName>
    </recommendedName>
</protein>
<comment type="subunit">
    <text evidence="4">Binds acetylated lysine residues in histone H1.4, H2A, H2B, H3 and H4 (in vitro).</text>
</comment>
<comment type="subcellular location">
    <subcellularLocation>
        <location evidence="5 6">Nucleus</location>
    </subcellularLocation>
    <text>Partially localizes to replication sites.</text>
</comment>
<comment type="alternative products">
    <event type="alternative splicing"/>
    <isoform>
        <id>Q9ULI0-1</id>
        <name>1</name>
        <sequence type="displayed"/>
    </isoform>
    <isoform>
        <id>Q9ULI0-2</id>
        <name>2</name>
        <sequence type="described" ref="VSP_023276"/>
    </isoform>
</comment>
<comment type="similarity">
    <text evidence="8">Belongs to the AAA ATPase family.</text>
</comment>
<comment type="sequence caution" evidence="8">
    <conflict type="erroneous initiation">
        <sequence resource="EMBL-CDS" id="BAD18469"/>
    </conflict>
    <text>Truncated N-terminus.</text>
</comment>
<dbReference type="EMBL" id="AC009242">
    <property type="status" value="NOT_ANNOTATED_CDS"/>
    <property type="molecule type" value="Genomic_DNA"/>
</dbReference>
<dbReference type="EMBL" id="AC066692">
    <property type="status" value="NOT_ANNOTATED_CDS"/>
    <property type="molecule type" value="Genomic_DNA"/>
</dbReference>
<dbReference type="EMBL" id="AC079924">
    <property type="status" value="NOT_ANNOTATED_CDS"/>
    <property type="molecule type" value="Genomic_DNA"/>
</dbReference>
<dbReference type="EMBL" id="AK094821">
    <property type="protein sequence ID" value="BAC04429.1"/>
    <property type="molecule type" value="mRNA"/>
</dbReference>
<dbReference type="EMBL" id="AK131301">
    <property type="protein sequence ID" value="BAD18469.1"/>
    <property type="status" value="ALT_INIT"/>
    <property type="molecule type" value="mRNA"/>
</dbReference>
<dbReference type="EMBL" id="AB033066">
    <property type="protein sequence ID" value="BAA86554.1"/>
    <property type="molecule type" value="mRNA"/>
</dbReference>
<dbReference type="CCDS" id="CCDS46227.1">
    <molecule id="Q9ULI0-1"/>
</dbReference>
<dbReference type="RefSeq" id="NP_001229267.2">
    <molecule id="Q9ULI0-2"/>
    <property type="nucleotide sequence ID" value="NM_001242338.3"/>
</dbReference>
<dbReference type="RefSeq" id="NP_060022.2">
    <molecule id="Q9ULI0-1"/>
    <property type="nucleotide sequence ID" value="NM_017552.4"/>
</dbReference>
<dbReference type="PDB" id="2DKW">
    <property type="method" value="NMR"/>
    <property type="chains" value="A=958-1080"/>
</dbReference>
<dbReference type="PDB" id="3LXJ">
    <property type="method" value="X-ray"/>
    <property type="resolution" value="2.33 A"/>
    <property type="chains" value="A/B/C/D=952-1086"/>
</dbReference>
<dbReference type="PDB" id="6VEO">
    <property type="method" value="X-ray"/>
    <property type="resolution" value="2.40 A"/>
    <property type="chains" value="A=953-1085"/>
</dbReference>
<dbReference type="PDB" id="8SDX">
    <property type="method" value="X-ray"/>
    <property type="resolution" value="2.69 A"/>
    <property type="chains" value="A/B=953-1085"/>
</dbReference>
<dbReference type="PDB" id="8UHL">
    <property type="method" value="X-ray"/>
    <property type="resolution" value="1.92 A"/>
    <property type="chains" value="A=953-1085"/>
</dbReference>
<dbReference type="PDB" id="8UK5">
    <property type="method" value="X-ray"/>
    <property type="resolution" value="1.40 A"/>
    <property type="chains" value="A=953-1085"/>
</dbReference>
<dbReference type="PDBsum" id="2DKW"/>
<dbReference type="PDBsum" id="3LXJ"/>
<dbReference type="PDBsum" id="6VEO"/>
<dbReference type="PDBsum" id="8SDX"/>
<dbReference type="PDBsum" id="8UHL"/>
<dbReference type="PDBsum" id="8UK5"/>
<dbReference type="SMR" id="Q9ULI0"/>
<dbReference type="BioGRID" id="119961">
    <property type="interactions" value="16"/>
</dbReference>
<dbReference type="FunCoup" id="Q9ULI0">
    <property type="interactions" value="3738"/>
</dbReference>
<dbReference type="IntAct" id="Q9ULI0">
    <property type="interactions" value="17"/>
</dbReference>
<dbReference type="MINT" id="Q9ULI0"/>
<dbReference type="STRING" id="9606.ENSP00000238789"/>
<dbReference type="BindingDB" id="Q9ULI0"/>
<dbReference type="ChEMBL" id="CHEMBL2176775"/>
<dbReference type="GuidetoPHARMACOLOGY" id="2720"/>
<dbReference type="GlyGen" id="Q9ULI0">
    <property type="glycosylation" value="1 site, 1 O-linked glycan (1 site)"/>
</dbReference>
<dbReference type="iPTMnet" id="Q9ULI0"/>
<dbReference type="PhosphoSitePlus" id="Q9ULI0"/>
<dbReference type="SwissPalm" id="Q9ULI0"/>
<dbReference type="BioMuta" id="ATAD2B"/>
<dbReference type="DMDM" id="296439432"/>
<dbReference type="jPOST" id="Q9ULI0"/>
<dbReference type="MassIVE" id="Q9ULI0"/>
<dbReference type="PaxDb" id="9606-ENSP00000238789"/>
<dbReference type="PeptideAtlas" id="Q9ULI0"/>
<dbReference type="ProteomicsDB" id="85032">
    <molecule id="Q9ULI0-1"/>
</dbReference>
<dbReference type="ProteomicsDB" id="85033">
    <molecule id="Q9ULI0-2"/>
</dbReference>
<dbReference type="Pumba" id="Q9ULI0"/>
<dbReference type="ABCD" id="Q9ULI0">
    <property type="antibodies" value="1 sequenced antibody"/>
</dbReference>
<dbReference type="Antibodypedia" id="27378">
    <property type="antibodies" value="28 antibodies from 12 providers"/>
</dbReference>
<dbReference type="DNASU" id="54454"/>
<dbReference type="Ensembl" id="ENST00000238789.10">
    <molecule id="Q9ULI0-1"/>
    <property type="protein sequence ID" value="ENSP00000238789.5"/>
    <property type="gene ID" value="ENSG00000119778.15"/>
</dbReference>
<dbReference type="GeneID" id="54454"/>
<dbReference type="KEGG" id="hsa:54454"/>
<dbReference type="MANE-Select" id="ENST00000238789.10">
    <property type="protein sequence ID" value="ENSP00000238789.5"/>
    <property type="RefSeq nucleotide sequence ID" value="NM_017552.4"/>
    <property type="RefSeq protein sequence ID" value="NP_060022.2"/>
</dbReference>
<dbReference type="UCSC" id="uc002rek.5">
    <molecule id="Q9ULI0-1"/>
    <property type="organism name" value="human"/>
</dbReference>
<dbReference type="AGR" id="HGNC:29230"/>
<dbReference type="CTD" id="54454"/>
<dbReference type="DisGeNET" id="54454"/>
<dbReference type="GeneCards" id="ATAD2B"/>
<dbReference type="HGNC" id="HGNC:29230">
    <property type="gene designation" value="ATAD2B"/>
</dbReference>
<dbReference type="HPA" id="ENSG00000119778">
    <property type="expression patterns" value="Low tissue specificity"/>
</dbReference>
<dbReference type="MIM" id="615347">
    <property type="type" value="gene"/>
</dbReference>
<dbReference type="neXtProt" id="NX_Q9ULI0"/>
<dbReference type="OpenTargets" id="ENSG00000119778"/>
<dbReference type="PharmGKB" id="PA162377039"/>
<dbReference type="VEuPathDB" id="HostDB:ENSG00000119778"/>
<dbReference type="eggNOG" id="KOG0730">
    <property type="taxonomic scope" value="Eukaryota"/>
</dbReference>
<dbReference type="eggNOG" id="KOG0732">
    <property type="taxonomic scope" value="Eukaryota"/>
</dbReference>
<dbReference type="GeneTree" id="ENSGT00550000074694"/>
<dbReference type="HOGENOM" id="CLU_001448_3_2_1"/>
<dbReference type="InParanoid" id="Q9ULI0"/>
<dbReference type="OMA" id="DKQCTTN"/>
<dbReference type="OrthoDB" id="5421at2759"/>
<dbReference type="PAN-GO" id="Q9ULI0">
    <property type="GO annotations" value="5 GO annotations based on evolutionary models"/>
</dbReference>
<dbReference type="PhylomeDB" id="Q9ULI0"/>
<dbReference type="TreeFam" id="TF314783"/>
<dbReference type="PathwayCommons" id="Q9ULI0"/>
<dbReference type="SignaLink" id="Q9ULI0"/>
<dbReference type="BioGRID-ORCS" id="54454">
    <property type="hits" value="8 hits in 1159 CRISPR screens"/>
</dbReference>
<dbReference type="ChiTaRS" id="ATAD2B">
    <property type="organism name" value="human"/>
</dbReference>
<dbReference type="EvolutionaryTrace" id="Q9ULI0"/>
<dbReference type="GenomeRNAi" id="54454"/>
<dbReference type="Pharos" id="Q9ULI0">
    <property type="development level" value="Tchem"/>
</dbReference>
<dbReference type="PRO" id="PR:Q9ULI0"/>
<dbReference type="Proteomes" id="UP000005640">
    <property type="component" value="Chromosome 2"/>
</dbReference>
<dbReference type="RNAct" id="Q9ULI0">
    <property type="molecule type" value="protein"/>
</dbReference>
<dbReference type="Bgee" id="ENSG00000119778">
    <property type="expression patterns" value="Expressed in buccal mucosa cell and 183 other cell types or tissues"/>
</dbReference>
<dbReference type="ExpressionAtlas" id="Q9ULI0">
    <property type="expression patterns" value="baseline and differential"/>
</dbReference>
<dbReference type="GO" id="GO:0005654">
    <property type="term" value="C:nucleoplasm"/>
    <property type="evidence" value="ECO:0000314"/>
    <property type="project" value="HPA"/>
</dbReference>
<dbReference type="GO" id="GO:0005634">
    <property type="term" value="C:nucleus"/>
    <property type="evidence" value="ECO:0000314"/>
    <property type="project" value="UniProtKB"/>
</dbReference>
<dbReference type="GO" id="GO:0005524">
    <property type="term" value="F:ATP binding"/>
    <property type="evidence" value="ECO:0007669"/>
    <property type="project" value="UniProtKB-KW"/>
</dbReference>
<dbReference type="GO" id="GO:0016887">
    <property type="term" value="F:ATP hydrolysis activity"/>
    <property type="evidence" value="ECO:0000318"/>
    <property type="project" value="GO_Central"/>
</dbReference>
<dbReference type="GO" id="GO:0003682">
    <property type="term" value="F:chromatin binding"/>
    <property type="evidence" value="ECO:0000318"/>
    <property type="project" value="GO_Central"/>
</dbReference>
<dbReference type="GO" id="GO:0042393">
    <property type="term" value="F:histone binding"/>
    <property type="evidence" value="ECO:0000318"/>
    <property type="project" value="GO_Central"/>
</dbReference>
<dbReference type="GO" id="GO:0070577">
    <property type="term" value="F:lysine-acetylated histone binding"/>
    <property type="evidence" value="ECO:0000314"/>
    <property type="project" value="UniProtKB"/>
</dbReference>
<dbReference type="GO" id="GO:0006334">
    <property type="term" value="P:nucleosome assembly"/>
    <property type="evidence" value="ECO:0000318"/>
    <property type="project" value="GO_Central"/>
</dbReference>
<dbReference type="GO" id="GO:0006337">
    <property type="term" value="P:nucleosome disassembly"/>
    <property type="evidence" value="ECO:0000318"/>
    <property type="project" value="GO_Central"/>
</dbReference>
<dbReference type="GO" id="GO:0045815">
    <property type="term" value="P:transcription initiation-coupled chromatin remodeling"/>
    <property type="evidence" value="ECO:0000318"/>
    <property type="project" value="GO_Central"/>
</dbReference>
<dbReference type="CDD" id="cd05528">
    <property type="entry name" value="Bromo_AAA"/>
    <property type="match status" value="1"/>
</dbReference>
<dbReference type="CDD" id="cd19517">
    <property type="entry name" value="RecA-like_Yta7-like"/>
    <property type="match status" value="1"/>
</dbReference>
<dbReference type="FunFam" id="1.20.920.10:FF:000021">
    <property type="entry name" value="ATPase family AAA domain-containing protein 2"/>
    <property type="match status" value="1"/>
</dbReference>
<dbReference type="FunFam" id="3.40.50.300:FF:000699">
    <property type="entry name" value="ATPase family AAA domain-containing protein 2B"/>
    <property type="match status" value="1"/>
</dbReference>
<dbReference type="FunFam" id="3.40.50.300:FF:000061">
    <property type="entry name" value="ATPase family, AAA domain-containing 2"/>
    <property type="match status" value="1"/>
</dbReference>
<dbReference type="FunFam" id="1.10.8.60:FF:000410">
    <property type="entry name" value="ATPase family, AAA domain-containing 2B"/>
    <property type="match status" value="1"/>
</dbReference>
<dbReference type="Gene3D" id="1.10.8.60">
    <property type="match status" value="1"/>
</dbReference>
<dbReference type="Gene3D" id="1.20.920.10">
    <property type="entry name" value="Bromodomain-like"/>
    <property type="match status" value="1"/>
</dbReference>
<dbReference type="Gene3D" id="3.40.50.300">
    <property type="entry name" value="P-loop containing nucleotide triphosphate hydrolases"/>
    <property type="match status" value="2"/>
</dbReference>
<dbReference type="InterPro" id="IPR003593">
    <property type="entry name" value="AAA+_ATPase"/>
</dbReference>
<dbReference type="InterPro" id="IPR041569">
    <property type="entry name" value="AAA_lid_3"/>
</dbReference>
<dbReference type="InterPro" id="IPR045199">
    <property type="entry name" value="ATAD2-like"/>
</dbReference>
<dbReference type="InterPro" id="IPR003959">
    <property type="entry name" value="ATPase_AAA_core"/>
</dbReference>
<dbReference type="InterPro" id="IPR003960">
    <property type="entry name" value="ATPase_AAA_CS"/>
</dbReference>
<dbReference type="InterPro" id="IPR001487">
    <property type="entry name" value="Bromodomain"/>
</dbReference>
<dbReference type="InterPro" id="IPR036427">
    <property type="entry name" value="Bromodomain-like_sf"/>
</dbReference>
<dbReference type="InterPro" id="IPR018359">
    <property type="entry name" value="Bromodomain_CS"/>
</dbReference>
<dbReference type="InterPro" id="IPR027417">
    <property type="entry name" value="P-loop_NTPase"/>
</dbReference>
<dbReference type="PANTHER" id="PTHR23069">
    <property type="entry name" value="AAA DOMAIN-CONTAINING"/>
    <property type="match status" value="1"/>
</dbReference>
<dbReference type="PANTHER" id="PTHR23069:SF5">
    <property type="entry name" value="ATPASE FAMILY AAA DOMAIN-CONTAINING PROTEIN 2B"/>
    <property type="match status" value="1"/>
</dbReference>
<dbReference type="Pfam" id="PF00004">
    <property type="entry name" value="AAA"/>
    <property type="match status" value="1"/>
</dbReference>
<dbReference type="Pfam" id="PF17862">
    <property type="entry name" value="AAA_lid_3"/>
    <property type="match status" value="1"/>
</dbReference>
<dbReference type="Pfam" id="PF00439">
    <property type="entry name" value="Bromodomain"/>
    <property type="match status" value="1"/>
</dbReference>
<dbReference type="PRINTS" id="PR00503">
    <property type="entry name" value="BROMODOMAIN"/>
</dbReference>
<dbReference type="SMART" id="SM00382">
    <property type="entry name" value="AAA"/>
    <property type="match status" value="1"/>
</dbReference>
<dbReference type="SMART" id="SM00297">
    <property type="entry name" value="BROMO"/>
    <property type="match status" value="1"/>
</dbReference>
<dbReference type="SUPFAM" id="SSF47370">
    <property type="entry name" value="Bromodomain"/>
    <property type="match status" value="1"/>
</dbReference>
<dbReference type="SUPFAM" id="SSF52540">
    <property type="entry name" value="P-loop containing nucleoside triphosphate hydrolases"/>
    <property type="match status" value="2"/>
</dbReference>
<dbReference type="PROSITE" id="PS00674">
    <property type="entry name" value="AAA"/>
    <property type="match status" value="1"/>
</dbReference>
<dbReference type="PROSITE" id="PS00633">
    <property type="entry name" value="BROMODOMAIN_1"/>
    <property type="match status" value="1"/>
</dbReference>
<dbReference type="PROSITE" id="PS50014">
    <property type="entry name" value="BROMODOMAIN_2"/>
    <property type="match status" value="1"/>
</dbReference>
<evidence type="ECO:0000255" key="1"/>
<evidence type="ECO:0000255" key="2">
    <source>
        <dbReference type="PROSITE-ProRule" id="PRU00035"/>
    </source>
</evidence>
<evidence type="ECO:0000256" key="3">
    <source>
        <dbReference type="SAM" id="MobiDB-lite"/>
    </source>
</evidence>
<evidence type="ECO:0000269" key="4">
    <source>
    </source>
</evidence>
<evidence type="ECO:0000269" key="5">
    <source>
    </source>
</evidence>
<evidence type="ECO:0000269" key="6">
    <source>
    </source>
</evidence>
<evidence type="ECO:0000303" key="7">
    <source>
    </source>
</evidence>
<evidence type="ECO:0000305" key="8"/>
<evidence type="ECO:0007744" key="9">
    <source>
    </source>
</evidence>
<evidence type="ECO:0007744" key="10">
    <source>
    </source>
</evidence>
<evidence type="ECO:0007744" key="11">
    <source>
    </source>
</evidence>
<evidence type="ECO:0007744" key="12">
    <source>
    </source>
</evidence>
<evidence type="ECO:0007829" key="13">
    <source>
        <dbReference type="PDB" id="8UK5"/>
    </source>
</evidence>